<name>RL1_BURMA</name>
<keyword id="KW-1185">Reference proteome</keyword>
<keyword id="KW-0678">Repressor</keyword>
<keyword id="KW-0687">Ribonucleoprotein</keyword>
<keyword id="KW-0689">Ribosomal protein</keyword>
<keyword id="KW-0694">RNA-binding</keyword>
<keyword id="KW-0699">rRNA-binding</keyword>
<keyword id="KW-0810">Translation regulation</keyword>
<keyword id="KW-0820">tRNA-binding</keyword>
<feature type="chain" id="PRO_0000125633" description="Large ribosomal subunit protein uL1">
    <location>
        <begin position="1"/>
        <end position="232"/>
    </location>
</feature>
<gene>
    <name evidence="1" type="primary">rplA</name>
    <name type="ordered locus">BMA2644</name>
</gene>
<accession>Q62GJ4</accession>
<reference key="1">
    <citation type="journal article" date="2004" name="Proc. Natl. Acad. Sci. U.S.A.">
        <title>Structural flexibility in the Burkholderia mallei genome.</title>
        <authorList>
            <person name="Nierman W.C."/>
            <person name="DeShazer D."/>
            <person name="Kim H.S."/>
            <person name="Tettelin H."/>
            <person name="Nelson K.E."/>
            <person name="Feldblyum T.V."/>
            <person name="Ulrich R.L."/>
            <person name="Ronning C.M."/>
            <person name="Brinkac L.M."/>
            <person name="Daugherty S.C."/>
            <person name="Davidsen T.D."/>
            <person name="DeBoy R.T."/>
            <person name="Dimitrov G."/>
            <person name="Dodson R.J."/>
            <person name="Durkin A.S."/>
            <person name="Gwinn M.L."/>
            <person name="Haft D.H."/>
            <person name="Khouri H.M."/>
            <person name="Kolonay J.F."/>
            <person name="Madupu R."/>
            <person name="Mohammoud Y."/>
            <person name="Nelson W.C."/>
            <person name="Radune D."/>
            <person name="Romero C.M."/>
            <person name="Sarria S."/>
            <person name="Selengut J."/>
            <person name="Shamblin C."/>
            <person name="Sullivan S.A."/>
            <person name="White O."/>
            <person name="Yu Y."/>
            <person name="Zafar N."/>
            <person name="Zhou L."/>
            <person name="Fraser C.M."/>
        </authorList>
    </citation>
    <scope>NUCLEOTIDE SEQUENCE [LARGE SCALE GENOMIC DNA]</scope>
    <source>
        <strain>ATCC 23344</strain>
    </source>
</reference>
<proteinExistence type="inferred from homology"/>
<dbReference type="EMBL" id="CP000010">
    <property type="protein sequence ID" value="AAU47881.1"/>
    <property type="molecule type" value="Genomic_DNA"/>
</dbReference>
<dbReference type="RefSeq" id="WP_004185135.1">
    <property type="nucleotide sequence ID" value="NC_006348.1"/>
</dbReference>
<dbReference type="RefSeq" id="YP_104177.1">
    <property type="nucleotide sequence ID" value="NC_006348.1"/>
</dbReference>
<dbReference type="SMR" id="Q62GJ4"/>
<dbReference type="GeneID" id="93061844"/>
<dbReference type="KEGG" id="bma:BMA2644"/>
<dbReference type="PATRIC" id="fig|243160.12.peg.2717"/>
<dbReference type="eggNOG" id="COG0081">
    <property type="taxonomic scope" value="Bacteria"/>
</dbReference>
<dbReference type="HOGENOM" id="CLU_062853_0_0_4"/>
<dbReference type="Proteomes" id="UP000006693">
    <property type="component" value="Chromosome 1"/>
</dbReference>
<dbReference type="GO" id="GO:0022625">
    <property type="term" value="C:cytosolic large ribosomal subunit"/>
    <property type="evidence" value="ECO:0007669"/>
    <property type="project" value="TreeGrafter"/>
</dbReference>
<dbReference type="GO" id="GO:0019843">
    <property type="term" value="F:rRNA binding"/>
    <property type="evidence" value="ECO:0007669"/>
    <property type="project" value="UniProtKB-UniRule"/>
</dbReference>
<dbReference type="GO" id="GO:0003735">
    <property type="term" value="F:structural constituent of ribosome"/>
    <property type="evidence" value="ECO:0007669"/>
    <property type="project" value="InterPro"/>
</dbReference>
<dbReference type="GO" id="GO:0000049">
    <property type="term" value="F:tRNA binding"/>
    <property type="evidence" value="ECO:0007669"/>
    <property type="project" value="UniProtKB-KW"/>
</dbReference>
<dbReference type="GO" id="GO:0006417">
    <property type="term" value="P:regulation of translation"/>
    <property type="evidence" value="ECO:0007669"/>
    <property type="project" value="UniProtKB-KW"/>
</dbReference>
<dbReference type="GO" id="GO:0006412">
    <property type="term" value="P:translation"/>
    <property type="evidence" value="ECO:0007669"/>
    <property type="project" value="UniProtKB-UniRule"/>
</dbReference>
<dbReference type="CDD" id="cd00403">
    <property type="entry name" value="Ribosomal_L1"/>
    <property type="match status" value="1"/>
</dbReference>
<dbReference type="FunFam" id="3.40.50.790:FF:000001">
    <property type="entry name" value="50S ribosomal protein L1"/>
    <property type="match status" value="1"/>
</dbReference>
<dbReference type="Gene3D" id="3.30.190.20">
    <property type="match status" value="1"/>
</dbReference>
<dbReference type="Gene3D" id="3.40.50.790">
    <property type="match status" value="1"/>
</dbReference>
<dbReference type="HAMAP" id="MF_01318_B">
    <property type="entry name" value="Ribosomal_uL1_B"/>
    <property type="match status" value="1"/>
</dbReference>
<dbReference type="InterPro" id="IPR005878">
    <property type="entry name" value="Ribosom_uL1_bac-type"/>
</dbReference>
<dbReference type="InterPro" id="IPR002143">
    <property type="entry name" value="Ribosomal_uL1"/>
</dbReference>
<dbReference type="InterPro" id="IPR023674">
    <property type="entry name" value="Ribosomal_uL1-like"/>
</dbReference>
<dbReference type="InterPro" id="IPR028364">
    <property type="entry name" value="Ribosomal_uL1/biogenesis"/>
</dbReference>
<dbReference type="InterPro" id="IPR016095">
    <property type="entry name" value="Ribosomal_uL1_3-a/b-sand"/>
</dbReference>
<dbReference type="InterPro" id="IPR023673">
    <property type="entry name" value="Ribosomal_uL1_CS"/>
</dbReference>
<dbReference type="NCBIfam" id="TIGR01169">
    <property type="entry name" value="rplA_bact"/>
    <property type="match status" value="1"/>
</dbReference>
<dbReference type="PANTHER" id="PTHR36427">
    <property type="entry name" value="54S RIBOSOMAL PROTEIN L1, MITOCHONDRIAL"/>
    <property type="match status" value="1"/>
</dbReference>
<dbReference type="PANTHER" id="PTHR36427:SF3">
    <property type="entry name" value="LARGE RIBOSOMAL SUBUNIT PROTEIN UL1M"/>
    <property type="match status" value="1"/>
</dbReference>
<dbReference type="Pfam" id="PF00687">
    <property type="entry name" value="Ribosomal_L1"/>
    <property type="match status" value="1"/>
</dbReference>
<dbReference type="PIRSF" id="PIRSF002155">
    <property type="entry name" value="Ribosomal_L1"/>
    <property type="match status" value="1"/>
</dbReference>
<dbReference type="SUPFAM" id="SSF56808">
    <property type="entry name" value="Ribosomal protein L1"/>
    <property type="match status" value="1"/>
</dbReference>
<dbReference type="PROSITE" id="PS01199">
    <property type="entry name" value="RIBOSOMAL_L1"/>
    <property type="match status" value="1"/>
</dbReference>
<protein>
    <recommendedName>
        <fullName evidence="1">Large ribosomal subunit protein uL1</fullName>
    </recommendedName>
    <alternativeName>
        <fullName evidence="2">50S ribosomal protein L1</fullName>
    </alternativeName>
</protein>
<comment type="function">
    <text evidence="1">Binds directly to 23S rRNA. The L1 stalk is quite mobile in the ribosome, and is involved in E site tRNA release.</text>
</comment>
<comment type="function">
    <text evidence="1">Protein L1 is also a translational repressor protein, it controls the translation of the L11 operon by binding to its mRNA.</text>
</comment>
<comment type="subunit">
    <text evidence="1">Part of the 50S ribosomal subunit.</text>
</comment>
<comment type="similarity">
    <text evidence="1">Belongs to the universal ribosomal protein uL1 family.</text>
</comment>
<evidence type="ECO:0000255" key="1">
    <source>
        <dbReference type="HAMAP-Rule" id="MF_01318"/>
    </source>
</evidence>
<evidence type="ECO:0000305" key="2"/>
<organism>
    <name type="scientific">Burkholderia mallei (strain ATCC 23344)</name>
    <dbReference type="NCBI Taxonomy" id="243160"/>
    <lineage>
        <taxon>Bacteria</taxon>
        <taxon>Pseudomonadati</taxon>
        <taxon>Pseudomonadota</taxon>
        <taxon>Betaproteobacteria</taxon>
        <taxon>Burkholderiales</taxon>
        <taxon>Burkholderiaceae</taxon>
        <taxon>Burkholderia</taxon>
        <taxon>pseudomallei group</taxon>
    </lineage>
</organism>
<sequence>MAKISKRRQAFAAKVDRQKLYPIDDALALVKECASAKFDESIDVAVQLGIDAKKSDQVVRGSVVLPAGTGKSVRVAVFAQGEKAEQARAAGAEVVGMEDLAEQIKAGQMDFDIVIASPDTMRIVGTLGQILGPRGLMPNPKVGTVTPDVATAVKNAKAGQVQFRVDKAGIIHATIGRASFEPTALRTNLSALIEALQKAKPATSKGVYLRKIALSSTMGVGVRVDQGSLAAQ</sequence>